<organism>
    <name type="scientific">Escherichia coli O7:K1 (strain IAI39 / ExPEC)</name>
    <dbReference type="NCBI Taxonomy" id="585057"/>
    <lineage>
        <taxon>Bacteria</taxon>
        <taxon>Pseudomonadati</taxon>
        <taxon>Pseudomonadota</taxon>
        <taxon>Gammaproteobacteria</taxon>
        <taxon>Enterobacterales</taxon>
        <taxon>Enterobacteriaceae</taxon>
        <taxon>Escherichia</taxon>
    </lineage>
</organism>
<accession>B7NNW6</accession>
<reference key="1">
    <citation type="journal article" date="2009" name="PLoS Genet.">
        <title>Organised genome dynamics in the Escherichia coli species results in highly diverse adaptive paths.</title>
        <authorList>
            <person name="Touchon M."/>
            <person name="Hoede C."/>
            <person name="Tenaillon O."/>
            <person name="Barbe V."/>
            <person name="Baeriswyl S."/>
            <person name="Bidet P."/>
            <person name="Bingen E."/>
            <person name="Bonacorsi S."/>
            <person name="Bouchier C."/>
            <person name="Bouvet O."/>
            <person name="Calteau A."/>
            <person name="Chiapello H."/>
            <person name="Clermont O."/>
            <person name="Cruveiller S."/>
            <person name="Danchin A."/>
            <person name="Diard M."/>
            <person name="Dossat C."/>
            <person name="Karoui M.E."/>
            <person name="Frapy E."/>
            <person name="Garry L."/>
            <person name="Ghigo J.M."/>
            <person name="Gilles A.M."/>
            <person name="Johnson J."/>
            <person name="Le Bouguenec C."/>
            <person name="Lescat M."/>
            <person name="Mangenot S."/>
            <person name="Martinez-Jehanne V."/>
            <person name="Matic I."/>
            <person name="Nassif X."/>
            <person name="Oztas S."/>
            <person name="Petit M.A."/>
            <person name="Pichon C."/>
            <person name="Rouy Z."/>
            <person name="Ruf C.S."/>
            <person name="Schneider D."/>
            <person name="Tourret J."/>
            <person name="Vacherie B."/>
            <person name="Vallenet D."/>
            <person name="Medigue C."/>
            <person name="Rocha E.P.C."/>
            <person name="Denamur E."/>
        </authorList>
    </citation>
    <scope>NUCLEOTIDE SEQUENCE [LARGE SCALE GENOMIC DNA]</scope>
    <source>
        <strain>IAI39 / ExPEC</strain>
    </source>
</reference>
<evidence type="ECO:0000255" key="1">
    <source>
        <dbReference type="HAMAP-Rule" id="MF_01356"/>
    </source>
</evidence>
<feature type="chain" id="PRO_0000376219" description="NADH-quinone oxidoreductase subunit B">
    <location>
        <begin position="1"/>
        <end position="220"/>
    </location>
</feature>
<feature type="binding site" evidence="1">
    <location>
        <position position="63"/>
    </location>
    <ligand>
        <name>[4Fe-4S] cluster</name>
        <dbReference type="ChEBI" id="CHEBI:49883"/>
    </ligand>
</feature>
<feature type="binding site" evidence="1">
    <location>
        <position position="64"/>
    </location>
    <ligand>
        <name>[4Fe-4S] cluster</name>
        <dbReference type="ChEBI" id="CHEBI:49883"/>
    </ligand>
</feature>
<feature type="binding site" evidence="1">
    <location>
        <position position="129"/>
    </location>
    <ligand>
        <name>[4Fe-4S] cluster</name>
        <dbReference type="ChEBI" id="CHEBI:49883"/>
    </ligand>
</feature>
<feature type="binding site" evidence="1">
    <location>
        <position position="158"/>
    </location>
    <ligand>
        <name>[4Fe-4S] cluster</name>
        <dbReference type="ChEBI" id="CHEBI:49883"/>
    </ligand>
</feature>
<comment type="function">
    <text evidence="1">NDH-1 shuttles electrons from NADH, via FMN and iron-sulfur (Fe-S) centers, to quinones in the respiratory chain. The immediate electron acceptor for the enzyme in this species is believed to be ubiquinone. Couples the redox reaction to proton translocation (for every two electrons transferred, four hydrogen ions are translocated across the cytoplasmic membrane), and thus conserves the redox energy in a proton gradient.</text>
</comment>
<comment type="catalytic activity">
    <reaction evidence="1">
        <text>a quinone + NADH + 5 H(+)(in) = a quinol + NAD(+) + 4 H(+)(out)</text>
        <dbReference type="Rhea" id="RHEA:57888"/>
        <dbReference type="ChEBI" id="CHEBI:15378"/>
        <dbReference type="ChEBI" id="CHEBI:24646"/>
        <dbReference type="ChEBI" id="CHEBI:57540"/>
        <dbReference type="ChEBI" id="CHEBI:57945"/>
        <dbReference type="ChEBI" id="CHEBI:132124"/>
    </reaction>
</comment>
<comment type="cofactor">
    <cofactor evidence="1">
        <name>[4Fe-4S] cluster</name>
        <dbReference type="ChEBI" id="CHEBI:49883"/>
    </cofactor>
    <text evidence="1">Binds 1 [4Fe-4S] cluster.</text>
</comment>
<comment type="subunit">
    <text evidence="1">NDH-1 is composed of 13 different subunits. Subunits NuoB, CD, E, F, and G constitute the peripheral sector of the complex.</text>
</comment>
<comment type="subcellular location">
    <subcellularLocation>
        <location evidence="1">Cell inner membrane</location>
        <topology evidence="1">Peripheral membrane protein</topology>
        <orientation evidence="1">Cytoplasmic side</orientation>
    </subcellularLocation>
</comment>
<comment type="similarity">
    <text evidence="1">Belongs to the complex I 20 kDa subunit family.</text>
</comment>
<dbReference type="EC" id="7.1.1.-" evidence="1"/>
<dbReference type="EMBL" id="CU928164">
    <property type="protein sequence ID" value="CAR18560.1"/>
    <property type="molecule type" value="Genomic_DNA"/>
</dbReference>
<dbReference type="RefSeq" id="WP_000386733.1">
    <property type="nucleotide sequence ID" value="NC_011750.1"/>
</dbReference>
<dbReference type="RefSeq" id="YP_002408390.1">
    <property type="nucleotide sequence ID" value="NC_011750.1"/>
</dbReference>
<dbReference type="SMR" id="B7NNW6"/>
<dbReference type="STRING" id="585057.ECIAI39_2434"/>
<dbReference type="GeneID" id="93774887"/>
<dbReference type="KEGG" id="ect:ECIAI39_2434"/>
<dbReference type="PATRIC" id="fig|585057.6.peg.2536"/>
<dbReference type="HOGENOM" id="CLU_055737_7_3_6"/>
<dbReference type="Proteomes" id="UP000000749">
    <property type="component" value="Chromosome"/>
</dbReference>
<dbReference type="GO" id="GO:0005886">
    <property type="term" value="C:plasma membrane"/>
    <property type="evidence" value="ECO:0007669"/>
    <property type="project" value="UniProtKB-SubCell"/>
</dbReference>
<dbReference type="GO" id="GO:0045271">
    <property type="term" value="C:respiratory chain complex I"/>
    <property type="evidence" value="ECO:0007669"/>
    <property type="project" value="TreeGrafter"/>
</dbReference>
<dbReference type="GO" id="GO:0051539">
    <property type="term" value="F:4 iron, 4 sulfur cluster binding"/>
    <property type="evidence" value="ECO:0007669"/>
    <property type="project" value="UniProtKB-KW"/>
</dbReference>
<dbReference type="GO" id="GO:0005506">
    <property type="term" value="F:iron ion binding"/>
    <property type="evidence" value="ECO:0007669"/>
    <property type="project" value="UniProtKB-UniRule"/>
</dbReference>
<dbReference type="GO" id="GO:0008137">
    <property type="term" value="F:NADH dehydrogenase (ubiquinone) activity"/>
    <property type="evidence" value="ECO:0007669"/>
    <property type="project" value="InterPro"/>
</dbReference>
<dbReference type="GO" id="GO:0050136">
    <property type="term" value="F:NADH:ubiquinone reductase (non-electrogenic) activity"/>
    <property type="evidence" value="ECO:0007669"/>
    <property type="project" value="UniProtKB-UniRule"/>
</dbReference>
<dbReference type="GO" id="GO:0048038">
    <property type="term" value="F:quinone binding"/>
    <property type="evidence" value="ECO:0007669"/>
    <property type="project" value="UniProtKB-KW"/>
</dbReference>
<dbReference type="GO" id="GO:0009060">
    <property type="term" value="P:aerobic respiration"/>
    <property type="evidence" value="ECO:0007669"/>
    <property type="project" value="TreeGrafter"/>
</dbReference>
<dbReference type="GO" id="GO:0015990">
    <property type="term" value="P:electron transport coupled proton transport"/>
    <property type="evidence" value="ECO:0007669"/>
    <property type="project" value="TreeGrafter"/>
</dbReference>
<dbReference type="FunFam" id="3.40.50.12280:FF:000002">
    <property type="entry name" value="NADH-quinone oxidoreductase subunit B"/>
    <property type="match status" value="1"/>
</dbReference>
<dbReference type="Gene3D" id="3.40.50.12280">
    <property type="match status" value="1"/>
</dbReference>
<dbReference type="HAMAP" id="MF_01356">
    <property type="entry name" value="NDH1_NuoB"/>
    <property type="match status" value="1"/>
</dbReference>
<dbReference type="InterPro" id="IPR006137">
    <property type="entry name" value="NADH_UbQ_OxRdtase-like_20kDa"/>
</dbReference>
<dbReference type="InterPro" id="IPR006138">
    <property type="entry name" value="NADH_UQ_OxRdtase_20Kd_su"/>
</dbReference>
<dbReference type="NCBIfam" id="TIGR01957">
    <property type="entry name" value="nuoB_fam"/>
    <property type="match status" value="1"/>
</dbReference>
<dbReference type="NCBIfam" id="NF005012">
    <property type="entry name" value="PRK06411.1"/>
    <property type="match status" value="1"/>
</dbReference>
<dbReference type="PANTHER" id="PTHR11995">
    <property type="entry name" value="NADH DEHYDROGENASE"/>
    <property type="match status" value="1"/>
</dbReference>
<dbReference type="PANTHER" id="PTHR11995:SF14">
    <property type="entry name" value="NADH DEHYDROGENASE [UBIQUINONE] IRON-SULFUR PROTEIN 7, MITOCHONDRIAL"/>
    <property type="match status" value="1"/>
</dbReference>
<dbReference type="Pfam" id="PF01058">
    <property type="entry name" value="Oxidored_q6"/>
    <property type="match status" value="1"/>
</dbReference>
<dbReference type="SUPFAM" id="SSF56770">
    <property type="entry name" value="HydA/Nqo6-like"/>
    <property type="match status" value="1"/>
</dbReference>
<dbReference type="PROSITE" id="PS01150">
    <property type="entry name" value="COMPLEX1_20K"/>
    <property type="match status" value="1"/>
</dbReference>
<proteinExistence type="inferred from homology"/>
<gene>
    <name evidence="1" type="primary">nuoB</name>
    <name type="ordered locus">ECIAI39_2434</name>
</gene>
<name>NUOB_ECO7I</name>
<keyword id="KW-0004">4Fe-4S</keyword>
<keyword id="KW-0997">Cell inner membrane</keyword>
<keyword id="KW-1003">Cell membrane</keyword>
<keyword id="KW-0408">Iron</keyword>
<keyword id="KW-0411">Iron-sulfur</keyword>
<keyword id="KW-0472">Membrane</keyword>
<keyword id="KW-0479">Metal-binding</keyword>
<keyword id="KW-0520">NAD</keyword>
<keyword id="KW-0874">Quinone</keyword>
<keyword id="KW-1278">Translocase</keyword>
<keyword id="KW-0813">Transport</keyword>
<keyword id="KW-0830">Ubiquinone</keyword>
<protein>
    <recommendedName>
        <fullName evidence="1">NADH-quinone oxidoreductase subunit B</fullName>
        <ecNumber evidence="1">7.1.1.-</ecNumber>
    </recommendedName>
    <alternativeName>
        <fullName evidence="1">NADH dehydrogenase I subunit B</fullName>
    </alternativeName>
    <alternativeName>
        <fullName evidence="1">NDH-1 subunit B</fullName>
    </alternativeName>
</protein>
<sequence>MDYTLTRIDPNGENDRYPLQKQEIVTDPLEQEVNKNVFMGKLNDMVNWGRKNSIWPYNFGLSCCYVEMVTSFTAVHDVARFGAEVLRASPRQADLMVVAGTCFTKMAPVIQRLYDQMLEPKWVISMGACANSGGMYDIYSVVQGVDKFIPVDVYIPGCPPRPEAYMQALMLLQESIGKERRPLSWVVGDQGVYRANMQSERERKRGERIAVTNLRTPDEI</sequence>